<feature type="chain" id="PRO_0000303503" description="tRNA N6-adenosine threonylcarbamoyltransferase">
    <location>
        <begin position="1"/>
        <end position="344"/>
    </location>
</feature>
<feature type="binding site" evidence="1">
    <location>
        <position position="111"/>
    </location>
    <ligand>
        <name>Fe cation</name>
        <dbReference type="ChEBI" id="CHEBI:24875"/>
    </ligand>
</feature>
<feature type="binding site" evidence="1">
    <location>
        <position position="115"/>
    </location>
    <ligand>
        <name>Fe cation</name>
        <dbReference type="ChEBI" id="CHEBI:24875"/>
    </ligand>
</feature>
<feature type="binding site" evidence="1">
    <location>
        <begin position="134"/>
        <end position="138"/>
    </location>
    <ligand>
        <name>substrate</name>
    </ligand>
</feature>
<feature type="binding site" evidence="1">
    <location>
        <position position="167"/>
    </location>
    <ligand>
        <name>substrate</name>
    </ligand>
</feature>
<feature type="binding site" evidence="1">
    <location>
        <position position="180"/>
    </location>
    <ligand>
        <name>substrate</name>
    </ligand>
</feature>
<feature type="binding site" evidence="1">
    <location>
        <position position="273"/>
    </location>
    <ligand>
        <name>substrate</name>
    </ligand>
</feature>
<feature type="binding site" evidence="1">
    <location>
        <position position="301"/>
    </location>
    <ligand>
        <name>Fe cation</name>
        <dbReference type="ChEBI" id="CHEBI:24875"/>
    </ligand>
</feature>
<gene>
    <name evidence="1" type="primary">tsaD</name>
    <name type="synonym">gcp</name>
    <name type="ordered locus">H16_A2730</name>
</gene>
<keyword id="KW-0012">Acyltransferase</keyword>
<keyword id="KW-0963">Cytoplasm</keyword>
<keyword id="KW-0408">Iron</keyword>
<keyword id="KW-0479">Metal-binding</keyword>
<keyword id="KW-1185">Reference proteome</keyword>
<keyword id="KW-0808">Transferase</keyword>
<keyword id="KW-0819">tRNA processing</keyword>
<comment type="function">
    <text evidence="1">Required for the formation of a threonylcarbamoyl group on adenosine at position 37 (t(6)A37) in tRNAs that read codons beginning with adenine. Is involved in the transfer of the threonylcarbamoyl moiety of threonylcarbamoyl-AMP (TC-AMP) to the N6 group of A37, together with TsaE and TsaB. TsaD likely plays a direct catalytic role in this reaction.</text>
</comment>
<comment type="catalytic activity">
    <reaction evidence="1">
        <text>L-threonylcarbamoyladenylate + adenosine(37) in tRNA = N(6)-L-threonylcarbamoyladenosine(37) in tRNA + AMP + H(+)</text>
        <dbReference type="Rhea" id="RHEA:37059"/>
        <dbReference type="Rhea" id="RHEA-COMP:10162"/>
        <dbReference type="Rhea" id="RHEA-COMP:10163"/>
        <dbReference type="ChEBI" id="CHEBI:15378"/>
        <dbReference type="ChEBI" id="CHEBI:73682"/>
        <dbReference type="ChEBI" id="CHEBI:74411"/>
        <dbReference type="ChEBI" id="CHEBI:74418"/>
        <dbReference type="ChEBI" id="CHEBI:456215"/>
        <dbReference type="EC" id="2.3.1.234"/>
    </reaction>
</comment>
<comment type="cofactor">
    <cofactor evidence="1">
        <name>Fe(2+)</name>
        <dbReference type="ChEBI" id="CHEBI:29033"/>
    </cofactor>
    <text evidence="1">Binds 1 Fe(2+) ion per subunit.</text>
</comment>
<comment type="subcellular location">
    <subcellularLocation>
        <location evidence="1">Cytoplasm</location>
    </subcellularLocation>
</comment>
<comment type="similarity">
    <text evidence="1">Belongs to the KAE1 / TsaD family.</text>
</comment>
<protein>
    <recommendedName>
        <fullName evidence="1">tRNA N6-adenosine threonylcarbamoyltransferase</fullName>
        <ecNumber evidence="1">2.3.1.234</ecNumber>
    </recommendedName>
    <alternativeName>
        <fullName evidence="1">N6-L-threonylcarbamoyladenine synthase</fullName>
        <shortName evidence="1">t(6)A synthase</shortName>
    </alternativeName>
    <alternativeName>
        <fullName evidence="1">t(6)A37 threonylcarbamoyladenosine biosynthesis protein TsaD</fullName>
    </alternativeName>
    <alternativeName>
        <fullName evidence="1">tRNA threonylcarbamoyladenosine biosynthesis protein TsaD</fullName>
    </alternativeName>
</protein>
<reference key="1">
    <citation type="journal article" date="2006" name="Nat. Biotechnol.">
        <title>Genome sequence of the bioplastic-producing 'Knallgas' bacterium Ralstonia eutropha H16.</title>
        <authorList>
            <person name="Pohlmann A."/>
            <person name="Fricke W.F."/>
            <person name="Reinecke F."/>
            <person name="Kusian B."/>
            <person name="Liesegang H."/>
            <person name="Cramm R."/>
            <person name="Eitinger T."/>
            <person name="Ewering C."/>
            <person name="Poetter M."/>
            <person name="Schwartz E."/>
            <person name="Strittmatter A."/>
            <person name="Voss I."/>
            <person name="Gottschalk G."/>
            <person name="Steinbuechel A."/>
            <person name="Friedrich B."/>
            <person name="Bowien B."/>
        </authorList>
    </citation>
    <scope>NUCLEOTIDE SEQUENCE [LARGE SCALE GENOMIC DNA]</scope>
    <source>
        <strain>ATCC 17699 / DSM 428 / KCTC 22496 / NCIMB 10442 / H16 / Stanier 337</strain>
    </source>
</reference>
<sequence>MLVLGIESSCDETGLALYDTGAGLLAHALHSQIAMHRDYGGVVPELASRDHIRRVLPLLEQVLADAGRTRQDIDAIAFTQGPGLAGALLVGASVANALGFALNVPMVGVHHLEGHLLSPLLTREPPPFPFVALLVSGGHTQLMEVRGIGDYTLLGETLDDAAGEAFDKTAKLLGLGYPGGPEVSRLAEFGIPGAFALPRPMLHSGNLDFSFAGLKTAVLTQTRKLANTCEQDRANLARAFVDAIVDVLAAKSMAALKQTGHKRLVVAGGVGANRQLRERLDQMGKQRKIDVYYPDLAFCTDNGAMIAFAGAMRLQAAPELARHEYGYGVTPRWDLADIRLPSAA</sequence>
<dbReference type="EC" id="2.3.1.234" evidence="1"/>
<dbReference type="EMBL" id="AM260479">
    <property type="protein sequence ID" value="CAJ93809.1"/>
    <property type="molecule type" value="Genomic_DNA"/>
</dbReference>
<dbReference type="RefSeq" id="WP_010813639.1">
    <property type="nucleotide sequence ID" value="NZ_CP039287.1"/>
</dbReference>
<dbReference type="SMR" id="Q0K862"/>
<dbReference type="STRING" id="381666.H16_A2730"/>
<dbReference type="KEGG" id="reh:H16_A2730"/>
<dbReference type="eggNOG" id="COG0533">
    <property type="taxonomic scope" value="Bacteria"/>
</dbReference>
<dbReference type="HOGENOM" id="CLU_023208_0_0_4"/>
<dbReference type="OrthoDB" id="9806197at2"/>
<dbReference type="Proteomes" id="UP000008210">
    <property type="component" value="Chromosome 1"/>
</dbReference>
<dbReference type="GO" id="GO:0005737">
    <property type="term" value="C:cytoplasm"/>
    <property type="evidence" value="ECO:0007669"/>
    <property type="project" value="UniProtKB-SubCell"/>
</dbReference>
<dbReference type="GO" id="GO:0005506">
    <property type="term" value="F:iron ion binding"/>
    <property type="evidence" value="ECO:0007669"/>
    <property type="project" value="UniProtKB-UniRule"/>
</dbReference>
<dbReference type="GO" id="GO:0061711">
    <property type="term" value="F:N(6)-L-threonylcarbamoyladenine synthase activity"/>
    <property type="evidence" value="ECO:0007669"/>
    <property type="project" value="UniProtKB-EC"/>
</dbReference>
<dbReference type="GO" id="GO:0002949">
    <property type="term" value="P:tRNA threonylcarbamoyladenosine modification"/>
    <property type="evidence" value="ECO:0007669"/>
    <property type="project" value="UniProtKB-UniRule"/>
</dbReference>
<dbReference type="CDD" id="cd24133">
    <property type="entry name" value="ASKHA_NBD_TsaD_bac"/>
    <property type="match status" value="1"/>
</dbReference>
<dbReference type="FunFam" id="3.30.420.40:FF:000012">
    <property type="entry name" value="tRNA N6-adenosine threonylcarbamoyltransferase"/>
    <property type="match status" value="1"/>
</dbReference>
<dbReference type="FunFam" id="3.30.420.40:FF:000040">
    <property type="entry name" value="tRNA N6-adenosine threonylcarbamoyltransferase"/>
    <property type="match status" value="1"/>
</dbReference>
<dbReference type="Gene3D" id="3.30.420.40">
    <property type="match status" value="2"/>
</dbReference>
<dbReference type="HAMAP" id="MF_01445">
    <property type="entry name" value="TsaD"/>
    <property type="match status" value="1"/>
</dbReference>
<dbReference type="InterPro" id="IPR043129">
    <property type="entry name" value="ATPase_NBD"/>
</dbReference>
<dbReference type="InterPro" id="IPR000905">
    <property type="entry name" value="Gcp-like_dom"/>
</dbReference>
<dbReference type="InterPro" id="IPR017861">
    <property type="entry name" value="KAE1/TsaD"/>
</dbReference>
<dbReference type="InterPro" id="IPR022450">
    <property type="entry name" value="TsaD"/>
</dbReference>
<dbReference type="NCBIfam" id="TIGR00329">
    <property type="entry name" value="gcp_kae1"/>
    <property type="match status" value="1"/>
</dbReference>
<dbReference type="NCBIfam" id="TIGR03723">
    <property type="entry name" value="T6A_TsaD_YgjD"/>
    <property type="match status" value="1"/>
</dbReference>
<dbReference type="PANTHER" id="PTHR11735">
    <property type="entry name" value="TRNA N6-ADENOSINE THREONYLCARBAMOYLTRANSFERASE"/>
    <property type="match status" value="1"/>
</dbReference>
<dbReference type="PANTHER" id="PTHR11735:SF6">
    <property type="entry name" value="TRNA N6-ADENOSINE THREONYLCARBAMOYLTRANSFERASE, MITOCHONDRIAL"/>
    <property type="match status" value="1"/>
</dbReference>
<dbReference type="Pfam" id="PF00814">
    <property type="entry name" value="TsaD"/>
    <property type="match status" value="1"/>
</dbReference>
<dbReference type="PRINTS" id="PR00789">
    <property type="entry name" value="OSIALOPTASE"/>
</dbReference>
<dbReference type="SUPFAM" id="SSF53067">
    <property type="entry name" value="Actin-like ATPase domain"/>
    <property type="match status" value="2"/>
</dbReference>
<evidence type="ECO:0000255" key="1">
    <source>
        <dbReference type="HAMAP-Rule" id="MF_01445"/>
    </source>
</evidence>
<proteinExistence type="inferred from homology"/>
<name>TSAD_CUPNH</name>
<organism>
    <name type="scientific">Cupriavidus necator (strain ATCC 17699 / DSM 428 / KCTC 22496 / NCIMB 10442 / H16 / Stanier 337)</name>
    <name type="common">Ralstonia eutropha</name>
    <dbReference type="NCBI Taxonomy" id="381666"/>
    <lineage>
        <taxon>Bacteria</taxon>
        <taxon>Pseudomonadati</taxon>
        <taxon>Pseudomonadota</taxon>
        <taxon>Betaproteobacteria</taxon>
        <taxon>Burkholderiales</taxon>
        <taxon>Burkholderiaceae</taxon>
        <taxon>Cupriavidus</taxon>
    </lineage>
</organism>
<accession>Q0K862</accession>